<name>ATPB_PROM9</name>
<dbReference type="EC" id="7.1.2.2" evidence="1"/>
<dbReference type="EMBL" id="CP000111">
    <property type="protein sequence ID" value="ABB50591.1"/>
    <property type="molecule type" value="Genomic_DNA"/>
</dbReference>
<dbReference type="RefSeq" id="WP_011377074.1">
    <property type="nucleotide sequence ID" value="NC_007577.1"/>
</dbReference>
<dbReference type="SMR" id="Q318V4"/>
<dbReference type="STRING" id="74546.PMT9312_1531"/>
<dbReference type="KEGG" id="pmi:PMT9312_1531"/>
<dbReference type="eggNOG" id="COG0055">
    <property type="taxonomic scope" value="Bacteria"/>
</dbReference>
<dbReference type="HOGENOM" id="CLU_022398_0_2_3"/>
<dbReference type="OrthoDB" id="9801639at2"/>
<dbReference type="Proteomes" id="UP000002715">
    <property type="component" value="Chromosome"/>
</dbReference>
<dbReference type="GO" id="GO:0031676">
    <property type="term" value="C:plasma membrane-derived thylakoid membrane"/>
    <property type="evidence" value="ECO:0007669"/>
    <property type="project" value="UniProtKB-SubCell"/>
</dbReference>
<dbReference type="GO" id="GO:0045259">
    <property type="term" value="C:proton-transporting ATP synthase complex"/>
    <property type="evidence" value="ECO:0007669"/>
    <property type="project" value="UniProtKB-KW"/>
</dbReference>
<dbReference type="GO" id="GO:0005524">
    <property type="term" value="F:ATP binding"/>
    <property type="evidence" value="ECO:0007669"/>
    <property type="project" value="UniProtKB-UniRule"/>
</dbReference>
<dbReference type="GO" id="GO:0016887">
    <property type="term" value="F:ATP hydrolysis activity"/>
    <property type="evidence" value="ECO:0007669"/>
    <property type="project" value="InterPro"/>
</dbReference>
<dbReference type="GO" id="GO:0046933">
    <property type="term" value="F:proton-transporting ATP synthase activity, rotational mechanism"/>
    <property type="evidence" value="ECO:0007669"/>
    <property type="project" value="UniProtKB-UniRule"/>
</dbReference>
<dbReference type="CDD" id="cd18110">
    <property type="entry name" value="ATP-synt_F1_beta_C"/>
    <property type="match status" value="1"/>
</dbReference>
<dbReference type="CDD" id="cd18115">
    <property type="entry name" value="ATP-synt_F1_beta_N"/>
    <property type="match status" value="1"/>
</dbReference>
<dbReference type="CDD" id="cd01133">
    <property type="entry name" value="F1-ATPase_beta_CD"/>
    <property type="match status" value="1"/>
</dbReference>
<dbReference type="FunFam" id="1.10.1140.10:FF:000001">
    <property type="entry name" value="ATP synthase subunit beta"/>
    <property type="match status" value="1"/>
</dbReference>
<dbReference type="FunFam" id="3.40.50.300:FF:000026">
    <property type="entry name" value="ATP synthase subunit beta"/>
    <property type="match status" value="1"/>
</dbReference>
<dbReference type="FunFam" id="2.40.10.170:FF:000002">
    <property type="entry name" value="ATP synthase subunit beta, chloroplastic"/>
    <property type="match status" value="1"/>
</dbReference>
<dbReference type="Gene3D" id="2.40.10.170">
    <property type="match status" value="1"/>
</dbReference>
<dbReference type="Gene3D" id="1.10.1140.10">
    <property type="entry name" value="Bovine Mitochondrial F1-atpase, Atp Synthase Beta Chain, Chain D, domain 3"/>
    <property type="match status" value="1"/>
</dbReference>
<dbReference type="Gene3D" id="3.40.50.300">
    <property type="entry name" value="P-loop containing nucleotide triphosphate hydrolases"/>
    <property type="match status" value="1"/>
</dbReference>
<dbReference type="HAMAP" id="MF_01347">
    <property type="entry name" value="ATP_synth_beta_bact"/>
    <property type="match status" value="1"/>
</dbReference>
<dbReference type="InterPro" id="IPR003593">
    <property type="entry name" value="AAA+_ATPase"/>
</dbReference>
<dbReference type="InterPro" id="IPR055190">
    <property type="entry name" value="ATP-synt_VA_C"/>
</dbReference>
<dbReference type="InterPro" id="IPR005722">
    <property type="entry name" value="ATP_synth_F1_bsu"/>
</dbReference>
<dbReference type="InterPro" id="IPR020003">
    <property type="entry name" value="ATPase_a/bsu_AS"/>
</dbReference>
<dbReference type="InterPro" id="IPR050053">
    <property type="entry name" value="ATPase_alpha/beta_chains"/>
</dbReference>
<dbReference type="InterPro" id="IPR004100">
    <property type="entry name" value="ATPase_F1/V1/A1_a/bsu_N"/>
</dbReference>
<dbReference type="InterPro" id="IPR036121">
    <property type="entry name" value="ATPase_F1/V1/A1_a/bsu_N_sf"/>
</dbReference>
<dbReference type="InterPro" id="IPR000194">
    <property type="entry name" value="ATPase_F1/V1/A1_a/bsu_nucl-bd"/>
</dbReference>
<dbReference type="InterPro" id="IPR024034">
    <property type="entry name" value="ATPase_F1/V1_b/a_C"/>
</dbReference>
<dbReference type="InterPro" id="IPR027417">
    <property type="entry name" value="P-loop_NTPase"/>
</dbReference>
<dbReference type="NCBIfam" id="TIGR01039">
    <property type="entry name" value="atpD"/>
    <property type="match status" value="1"/>
</dbReference>
<dbReference type="PANTHER" id="PTHR15184">
    <property type="entry name" value="ATP SYNTHASE"/>
    <property type="match status" value="1"/>
</dbReference>
<dbReference type="PANTHER" id="PTHR15184:SF71">
    <property type="entry name" value="ATP SYNTHASE SUBUNIT BETA, MITOCHONDRIAL"/>
    <property type="match status" value="1"/>
</dbReference>
<dbReference type="Pfam" id="PF00006">
    <property type="entry name" value="ATP-synt_ab"/>
    <property type="match status" value="1"/>
</dbReference>
<dbReference type="Pfam" id="PF02874">
    <property type="entry name" value="ATP-synt_ab_N"/>
    <property type="match status" value="1"/>
</dbReference>
<dbReference type="Pfam" id="PF22919">
    <property type="entry name" value="ATP-synt_VA_C"/>
    <property type="match status" value="1"/>
</dbReference>
<dbReference type="SMART" id="SM00382">
    <property type="entry name" value="AAA"/>
    <property type="match status" value="1"/>
</dbReference>
<dbReference type="SUPFAM" id="SSF47917">
    <property type="entry name" value="C-terminal domain of alpha and beta subunits of F1 ATP synthase"/>
    <property type="match status" value="1"/>
</dbReference>
<dbReference type="SUPFAM" id="SSF50615">
    <property type="entry name" value="N-terminal domain of alpha and beta subunits of F1 ATP synthase"/>
    <property type="match status" value="1"/>
</dbReference>
<dbReference type="SUPFAM" id="SSF52540">
    <property type="entry name" value="P-loop containing nucleoside triphosphate hydrolases"/>
    <property type="match status" value="1"/>
</dbReference>
<dbReference type="PROSITE" id="PS00152">
    <property type="entry name" value="ATPASE_ALPHA_BETA"/>
    <property type="match status" value="1"/>
</dbReference>
<keyword id="KW-0066">ATP synthesis</keyword>
<keyword id="KW-0067">ATP-binding</keyword>
<keyword id="KW-0139">CF(1)</keyword>
<keyword id="KW-0375">Hydrogen ion transport</keyword>
<keyword id="KW-0406">Ion transport</keyword>
<keyword id="KW-0472">Membrane</keyword>
<keyword id="KW-0547">Nucleotide-binding</keyword>
<keyword id="KW-0793">Thylakoid</keyword>
<keyword id="KW-1278">Translocase</keyword>
<keyword id="KW-0813">Transport</keyword>
<evidence type="ECO:0000255" key="1">
    <source>
        <dbReference type="HAMAP-Rule" id="MF_01347"/>
    </source>
</evidence>
<protein>
    <recommendedName>
        <fullName evidence="1">ATP synthase subunit beta</fullName>
        <ecNumber evidence="1">7.1.2.2</ecNumber>
    </recommendedName>
    <alternativeName>
        <fullName evidence="1">ATP synthase F1 sector subunit beta</fullName>
    </alternativeName>
    <alternativeName>
        <fullName evidence="1">F-ATPase subunit beta</fullName>
    </alternativeName>
</protein>
<sequence length="486" mass="52199">MVATPSTSSQTKGVVRQVIGPVLDVEFPAGKLPKILNALRIEAKNPAGQEIALTAEVQQLLGDHRVRAVAMSGTDGLVRGMEAVDTGAPISVPVGEATLGRIFNVLGEPVDEQGPVKTKDTAPIHRAAPKLTDLETKPKVFETGIKVIDLLAPYRQGGKVGLFGGAGVGKTVLIQELINNIAKEHGGVSVFGGVGERTREGNDLYEEFKESGVINADDLTQSKVALCFGQMNEPPGARMRVGLSALTMAEHFRDVNKQDVLLFVDNIFRFVQAGSEVSALLGRMPSAVGYQPTLGTDVGELQERITSTLEGSITSIQAVYVPADDLTDPAPATTFAHLDATTVLARALAAKGIYPAVDPLDSTSTMLQPSVVGDEHYKTARAVQSTLQRYKELQDIIAILGLDELSEEDRLTVDRARKIEKFLSQPFFVAEIFTGMSGKYVKLEETIAGFNMILSGELDDLPEQAFYLVGNIDEVKAKAEKLKSEK</sequence>
<organism>
    <name type="scientific">Prochlorococcus marinus (strain MIT 9312)</name>
    <dbReference type="NCBI Taxonomy" id="74546"/>
    <lineage>
        <taxon>Bacteria</taxon>
        <taxon>Bacillati</taxon>
        <taxon>Cyanobacteriota</taxon>
        <taxon>Cyanophyceae</taxon>
        <taxon>Synechococcales</taxon>
        <taxon>Prochlorococcaceae</taxon>
        <taxon>Prochlorococcus</taxon>
    </lineage>
</organism>
<proteinExistence type="inferred from homology"/>
<gene>
    <name evidence="1" type="primary">atpD</name>
    <name evidence="1" type="synonym">atpB</name>
    <name type="ordered locus">PMT9312_1531</name>
</gene>
<accession>Q318V4</accession>
<comment type="function">
    <text evidence="1">Produces ATP from ADP in the presence of a proton gradient across the membrane. The catalytic sites are hosted primarily by the beta subunits.</text>
</comment>
<comment type="catalytic activity">
    <reaction evidence="1">
        <text>ATP + H2O + 4 H(+)(in) = ADP + phosphate + 5 H(+)(out)</text>
        <dbReference type="Rhea" id="RHEA:57720"/>
        <dbReference type="ChEBI" id="CHEBI:15377"/>
        <dbReference type="ChEBI" id="CHEBI:15378"/>
        <dbReference type="ChEBI" id="CHEBI:30616"/>
        <dbReference type="ChEBI" id="CHEBI:43474"/>
        <dbReference type="ChEBI" id="CHEBI:456216"/>
        <dbReference type="EC" id="7.1.2.2"/>
    </reaction>
</comment>
<comment type="subunit">
    <text evidence="1">F-type ATPases have 2 components, CF(1) - the catalytic core - and CF(0) - the membrane proton channel. CF(1) has five subunits: alpha(3), beta(3), gamma(1), delta(1), epsilon(1). CF(0) has four main subunits: a(1), b(1), b'(1) and c(9-12).</text>
</comment>
<comment type="subcellular location">
    <subcellularLocation>
        <location evidence="1">Cellular thylakoid membrane</location>
        <topology evidence="1">Peripheral membrane protein</topology>
    </subcellularLocation>
</comment>
<comment type="similarity">
    <text evidence="1">Belongs to the ATPase alpha/beta chains family.</text>
</comment>
<reference key="1">
    <citation type="journal article" date="2006" name="Science">
        <title>Genomic islands and the ecology and evolution of Prochlorococcus.</title>
        <authorList>
            <person name="Coleman M.L."/>
            <person name="Sullivan M.B."/>
            <person name="Martiny A.C."/>
            <person name="Steglich C."/>
            <person name="Barry K."/>
            <person name="Delong E.F."/>
            <person name="Chisholm S.W."/>
        </authorList>
    </citation>
    <scope>NUCLEOTIDE SEQUENCE [LARGE SCALE GENOMIC DNA]</scope>
    <source>
        <strain>MIT 9312</strain>
    </source>
</reference>
<feature type="chain" id="PRO_0000254332" description="ATP synthase subunit beta">
    <location>
        <begin position="1"/>
        <end position="486"/>
    </location>
</feature>
<feature type="binding site" evidence="1">
    <location>
        <begin position="164"/>
        <end position="171"/>
    </location>
    <ligand>
        <name>ATP</name>
        <dbReference type="ChEBI" id="CHEBI:30616"/>
    </ligand>
</feature>